<feature type="initiator methionine" description="Removed" evidence="1">
    <location>
        <position position="1"/>
    </location>
</feature>
<feature type="chain" id="PRO_0000131066" description="Large ribosomal subunit protein uL6">
    <location>
        <begin position="2"/>
        <end position="177"/>
    </location>
</feature>
<keyword id="KW-0687">Ribonucleoprotein</keyword>
<keyword id="KW-0689">Ribosomal protein</keyword>
<keyword id="KW-0694">RNA-binding</keyword>
<keyword id="KW-0699">rRNA-binding</keyword>
<name>RL6_SALTI</name>
<reference key="1">
    <citation type="journal article" date="2001" name="Nature">
        <title>Complete genome sequence of a multiple drug resistant Salmonella enterica serovar Typhi CT18.</title>
        <authorList>
            <person name="Parkhill J."/>
            <person name="Dougan G."/>
            <person name="James K.D."/>
            <person name="Thomson N.R."/>
            <person name="Pickard D."/>
            <person name="Wain J."/>
            <person name="Churcher C.M."/>
            <person name="Mungall K.L."/>
            <person name="Bentley S.D."/>
            <person name="Holden M.T.G."/>
            <person name="Sebaihia M."/>
            <person name="Baker S."/>
            <person name="Basham D."/>
            <person name="Brooks K."/>
            <person name="Chillingworth T."/>
            <person name="Connerton P."/>
            <person name="Cronin A."/>
            <person name="Davis P."/>
            <person name="Davies R.M."/>
            <person name="Dowd L."/>
            <person name="White N."/>
            <person name="Farrar J."/>
            <person name="Feltwell T."/>
            <person name="Hamlin N."/>
            <person name="Haque A."/>
            <person name="Hien T.T."/>
            <person name="Holroyd S."/>
            <person name="Jagels K."/>
            <person name="Krogh A."/>
            <person name="Larsen T.S."/>
            <person name="Leather S."/>
            <person name="Moule S."/>
            <person name="O'Gaora P."/>
            <person name="Parry C."/>
            <person name="Quail M.A."/>
            <person name="Rutherford K.M."/>
            <person name="Simmonds M."/>
            <person name="Skelton J."/>
            <person name="Stevens K."/>
            <person name="Whitehead S."/>
            <person name="Barrell B.G."/>
        </authorList>
    </citation>
    <scope>NUCLEOTIDE SEQUENCE [LARGE SCALE GENOMIC DNA]</scope>
    <source>
        <strain>CT18</strain>
    </source>
</reference>
<reference key="2">
    <citation type="journal article" date="2003" name="J. Bacteriol.">
        <title>Comparative genomics of Salmonella enterica serovar Typhi strains Ty2 and CT18.</title>
        <authorList>
            <person name="Deng W."/>
            <person name="Liou S.-R."/>
            <person name="Plunkett G. III"/>
            <person name="Mayhew G.F."/>
            <person name="Rose D.J."/>
            <person name="Burland V."/>
            <person name="Kodoyianni V."/>
            <person name="Schwartz D.C."/>
            <person name="Blattner F.R."/>
        </authorList>
    </citation>
    <scope>NUCLEOTIDE SEQUENCE [LARGE SCALE GENOMIC DNA]</scope>
    <source>
        <strain>ATCC 700931 / Ty2</strain>
    </source>
</reference>
<accession>P66314</accession>
<accession>Q8XFL6</accession>
<evidence type="ECO:0000250" key="1"/>
<evidence type="ECO:0000255" key="2">
    <source>
        <dbReference type="HAMAP-Rule" id="MF_01365"/>
    </source>
</evidence>
<evidence type="ECO:0000305" key="3"/>
<sequence>MSRVAKAPVVVPAGVDVKINGQVITIKGKNGELTRTLNDAVEVKHADNALTFGPRDGYADGWAQAGTARALLNSMVIGVTEGFTKKLQLVGVGYRAAVKGNVVNLSLGFSHPVDHQLPAGITAECPTQTEIVLKGADKQVIGQVAADLRAYRRPEPYKGKGVRYADEVVRTKEAKKK</sequence>
<proteinExistence type="inferred from homology"/>
<protein>
    <recommendedName>
        <fullName evidence="2">Large ribosomal subunit protein uL6</fullName>
    </recommendedName>
    <alternativeName>
        <fullName evidence="3">50S ribosomal protein L6</fullName>
    </alternativeName>
</protein>
<organism>
    <name type="scientific">Salmonella typhi</name>
    <dbReference type="NCBI Taxonomy" id="90370"/>
    <lineage>
        <taxon>Bacteria</taxon>
        <taxon>Pseudomonadati</taxon>
        <taxon>Pseudomonadota</taxon>
        <taxon>Gammaproteobacteria</taxon>
        <taxon>Enterobacterales</taxon>
        <taxon>Enterobacteriaceae</taxon>
        <taxon>Salmonella</taxon>
    </lineage>
</organism>
<comment type="function">
    <text evidence="2">This protein binds to the 23S rRNA, and is important in its secondary structure. It is located near the subunit interface in the base of the L7/L12 stalk, and near the tRNA binding site of the peptidyltransferase center.</text>
</comment>
<comment type="subunit">
    <text evidence="2">Part of the 50S ribosomal subunit.</text>
</comment>
<comment type="similarity">
    <text evidence="2">Belongs to the universal ribosomal protein uL6 family.</text>
</comment>
<dbReference type="EMBL" id="AL513382">
    <property type="protein sequence ID" value="CAD09161.1"/>
    <property type="molecule type" value="Genomic_DNA"/>
</dbReference>
<dbReference type="EMBL" id="AE014613">
    <property type="protein sequence ID" value="AAO71547.1"/>
    <property type="molecule type" value="Genomic_DNA"/>
</dbReference>
<dbReference type="RefSeq" id="NP_458475.1">
    <property type="nucleotide sequence ID" value="NC_003198.1"/>
</dbReference>
<dbReference type="RefSeq" id="WP_000091939.1">
    <property type="nucleotide sequence ID" value="NZ_WSUR01000046.1"/>
</dbReference>
<dbReference type="SMR" id="P66314"/>
<dbReference type="STRING" id="220341.gene:17588201"/>
<dbReference type="KEGG" id="stt:t4080"/>
<dbReference type="KEGG" id="sty:STY4373"/>
<dbReference type="PATRIC" id="fig|220341.7.peg.4469"/>
<dbReference type="eggNOG" id="COG0097">
    <property type="taxonomic scope" value="Bacteria"/>
</dbReference>
<dbReference type="HOGENOM" id="CLU_065464_1_2_6"/>
<dbReference type="OMA" id="RERHGLC"/>
<dbReference type="OrthoDB" id="9805007at2"/>
<dbReference type="Proteomes" id="UP000000541">
    <property type="component" value="Chromosome"/>
</dbReference>
<dbReference type="Proteomes" id="UP000002670">
    <property type="component" value="Chromosome"/>
</dbReference>
<dbReference type="GO" id="GO:0022625">
    <property type="term" value="C:cytosolic large ribosomal subunit"/>
    <property type="evidence" value="ECO:0007669"/>
    <property type="project" value="TreeGrafter"/>
</dbReference>
<dbReference type="GO" id="GO:0019843">
    <property type="term" value="F:rRNA binding"/>
    <property type="evidence" value="ECO:0007669"/>
    <property type="project" value="UniProtKB-UniRule"/>
</dbReference>
<dbReference type="GO" id="GO:0003735">
    <property type="term" value="F:structural constituent of ribosome"/>
    <property type="evidence" value="ECO:0007669"/>
    <property type="project" value="InterPro"/>
</dbReference>
<dbReference type="GO" id="GO:0002181">
    <property type="term" value="P:cytoplasmic translation"/>
    <property type="evidence" value="ECO:0007669"/>
    <property type="project" value="TreeGrafter"/>
</dbReference>
<dbReference type="FunFam" id="3.90.930.12:FF:000001">
    <property type="entry name" value="50S ribosomal protein L6"/>
    <property type="match status" value="1"/>
</dbReference>
<dbReference type="FunFam" id="3.90.930.12:FF:000002">
    <property type="entry name" value="50S ribosomal protein L6"/>
    <property type="match status" value="1"/>
</dbReference>
<dbReference type="Gene3D" id="3.90.930.12">
    <property type="entry name" value="Ribosomal protein L6, alpha-beta domain"/>
    <property type="match status" value="2"/>
</dbReference>
<dbReference type="HAMAP" id="MF_01365_B">
    <property type="entry name" value="Ribosomal_uL6_B"/>
    <property type="match status" value="1"/>
</dbReference>
<dbReference type="InterPro" id="IPR000702">
    <property type="entry name" value="Ribosomal_uL6-like"/>
</dbReference>
<dbReference type="InterPro" id="IPR036789">
    <property type="entry name" value="Ribosomal_uL6-like_a/b-dom_sf"/>
</dbReference>
<dbReference type="InterPro" id="IPR020040">
    <property type="entry name" value="Ribosomal_uL6_a/b-dom"/>
</dbReference>
<dbReference type="InterPro" id="IPR019906">
    <property type="entry name" value="Ribosomal_uL6_bac-type"/>
</dbReference>
<dbReference type="InterPro" id="IPR002358">
    <property type="entry name" value="Ribosomal_uL6_CS"/>
</dbReference>
<dbReference type="NCBIfam" id="TIGR03654">
    <property type="entry name" value="L6_bact"/>
    <property type="match status" value="1"/>
</dbReference>
<dbReference type="PANTHER" id="PTHR11655">
    <property type="entry name" value="60S/50S RIBOSOMAL PROTEIN L6/L9"/>
    <property type="match status" value="1"/>
</dbReference>
<dbReference type="PANTHER" id="PTHR11655:SF14">
    <property type="entry name" value="LARGE RIBOSOMAL SUBUNIT PROTEIN UL6M"/>
    <property type="match status" value="1"/>
</dbReference>
<dbReference type="Pfam" id="PF00347">
    <property type="entry name" value="Ribosomal_L6"/>
    <property type="match status" value="2"/>
</dbReference>
<dbReference type="PIRSF" id="PIRSF002162">
    <property type="entry name" value="Ribosomal_L6"/>
    <property type="match status" value="1"/>
</dbReference>
<dbReference type="PRINTS" id="PR00059">
    <property type="entry name" value="RIBOSOMALL6"/>
</dbReference>
<dbReference type="SUPFAM" id="SSF56053">
    <property type="entry name" value="Ribosomal protein L6"/>
    <property type="match status" value="2"/>
</dbReference>
<dbReference type="PROSITE" id="PS00525">
    <property type="entry name" value="RIBOSOMAL_L6_1"/>
    <property type="match status" value="1"/>
</dbReference>
<gene>
    <name evidence="2" type="primary">rplF</name>
    <name type="ordered locus">STY4373</name>
    <name type="ordered locus">t4080</name>
</gene>